<evidence type="ECO:0000255" key="1">
    <source>
        <dbReference type="HAMAP-Rule" id="MF_01208"/>
    </source>
</evidence>
<dbReference type="EC" id="2.4.2.10" evidence="1"/>
<dbReference type="EMBL" id="CP000377">
    <property type="protein sequence ID" value="ABF64510.1"/>
    <property type="molecule type" value="Genomic_DNA"/>
</dbReference>
<dbReference type="RefSeq" id="WP_011539105.1">
    <property type="nucleotide sequence ID" value="NC_008044.1"/>
</dbReference>
<dbReference type="SMR" id="Q1GFQ6"/>
<dbReference type="STRING" id="292414.TM1040_1777"/>
<dbReference type="KEGG" id="sit:TM1040_1777"/>
<dbReference type="eggNOG" id="COG0461">
    <property type="taxonomic scope" value="Bacteria"/>
</dbReference>
<dbReference type="HOGENOM" id="CLU_074878_1_0_5"/>
<dbReference type="OrthoDB" id="9802134at2"/>
<dbReference type="UniPathway" id="UPA00070">
    <property type="reaction ID" value="UER00119"/>
</dbReference>
<dbReference type="Proteomes" id="UP000000636">
    <property type="component" value="Chromosome"/>
</dbReference>
<dbReference type="GO" id="GO:0000287">
    <property type="term" value="F:magnesium ion binding"/>
    <property type="evidence" value="ECO:0007669"/>
    <property type="project" value="UniProtKB-UniRule"/>
</dbReference>
<dbReference type="GO" id="GO:0004588">
    <property type="term" value="F:orotate phosphoribosyltransferase activity"/>
    <property type="evidence" value="ECO:0007669"/>
    <property type="project" value="UniProtKB-UniRule"/>
</dbReference>
<dbReference type="GO" id="GO:0044205">
    <property type="term" value="P:'de novo' UMP biosynthetic process"/>
    <property type="evidence" value="ECO:0007669"/>
    <property type="project" value="UniProtKB-UniRule"/>
</dbReference>
<dbReference type="GO" id="GO:0019856">
    <property type="term" value="P:pyrimidine nucleobase biosynthetic process"/>
    <property type="evidence" value="ECO:0007669"/>
    <property type="project" value="TreeGrafter"/>
</dbReference>
<dbReference type="CDD" id="cd06223">
    <property type="entry name" value="PRTases_typeI"/>
    <property type="match status" value="1"/>
</dbReference>
<dbReference type="Gene3D" id="3.40.50.2020">
    <property type="match status" value="1"/>
</dbReference>
<dbReference type="HAMAP" id="MF_01208">
    <property type="entry name" value="PyrE"/>
    <property type="match status" value="1"/>
</dbReference>
<dbReference type="InterPro" id="IPR023031">
    <property type="entry name" value="OPRT"/>
</dbReference>
<dbReference type="InterPro" id="IPR000836">
    <property type="entry name" value="PRibTrfase_dom"/>
</dbReference>
<dbReference type="InterPro" id="IPR029057">
    <property type="entry name" value="PRTase-like"/>
</dbReference>
<dbReference type="NCBIfam" id="NF001729">
    <property type="entry name" value="PRK00455.1-3"/>
    <property type="match status" value="1"/>
</dbReference>
<dbReference type="PANTHER" id="PTHR19278">
    <property type="entry name" value="OROTATE PHOSPHORIBOSYLTRANSFERASE"/>
    <property type="match status" value="1"/>
</dbReference>
<dbReference type="PANTHER" id="PTHR19278:SF9">
    <property type="entry name" value="URIDINE 5'-MONOPHOSPHATE SYNTHASE"/>
    <property type="match status" value="1"/>
</dbReference>
<dbReference type="Pfam" id="PF00156">
    <property type="entry name" value="Pribosyltran"/>
    <property type="match status" value="1"/>
</dbReference>
<dbReference type="SUPFAM" id="SSF53271">
    <property type="entry name" value="PRTase-like"/>
    <property type="match status" value="1"/>
</dbReference>
<keyword id="KW-0328">Glycosyltransferase</keyword>
<keyword id="KW-0460">Magnesium</keyword>
<keyword id="KW-0665">Pyrimidine biosynthesis</keyword>
<keyword id="KW-1185">Reference proteome</keyword>
<keyword id="KW-0808">Transferase</keyword>
<name>PYRE_RUEST</name>
<organism>
    <name type="scientific">Ruegeria sp. (strain TM1040)</name>
    <name type="common">Silicibacter sp.</name>
    <dbReference type="NCBI Taxonomy" id="292414"/>
    <lineage>
        <taxon>Bacteria</taxon>
        <taxon>Pseudomonadati</taxon>
        <taxon>Pseudomonadota</taxon>
        <taxon>Alphaproteobacteria</taxon>
        <taxon>Rhodobacterales</taxon>
        <taxon>Roseobacteraceae</taxon>
        <taxon>Ruegeria</taxon>
    </lineage>
</organism>
<gene>
    <name evidence="1" type="primary">pyrE</name>
    <name type="ordered locus">TM1040_1777</name>
</gene>
<reference key="1">
    <citation type="submission" date="2006-05" db="EMBL/GenBank/DDBJ databases">
        <title>Complete sequence of chromosome of Silicibacter sp. TM1040.</title>
        <authorList>
            <consortium name="US DOE Joint Genome Institute"/>
            <person name="Copeland A."/>
            <person name="Lucas S."/>
            <person name="Lapidus A."/>
            <person name="Barry K."/>
            <person name="Detter J.C."/>
            <person name="Glavina del Rio T."/>
            <person name="Hammon N."/>
            <person name="Israni S."/>
            <person name="Dalin E."/>
            <person name="Tice H."/>
            <person name="Pitluck S."/>
            <person name="Brettin T."/>
            <person name="Bruce D."/>
            <person name="Han C."/>
            <person name="Tapia R."/>
            <person name="Goodwin L."/>
            <person name="Thompson L.S."/>
            <person name="Gilna P."/>
            <person name="Schmutz J."/>
            <person name="Larimer F."/>
            <person name="Land M."/>
            <person name="Hauser L."/>
            <person name="Kyrpides N."/>
            <person name="Kim E."/>
            <person name="Belas R."/>
            <person name="Moran M.A."/>
            <person name="Buchan A."/>
            <person name="Gonzalez J.M."/>
            <person name="Schell M.A."/>
            <person name="Sun F."/>
            <person name="Richardson P."/>
        </authorList>
    </citation>
    <scope>NUCLEOTIDE SEQUENCE [LARGE SCALE GENOMIC DNA]</scope>
    <source>
        <strain>TM1040</strain>
    </source>
</reference>
<feature type="chain" id="PRO_1000066301" description="Orotate phosphoribosyltransferase">
    <location>
        <begin position="1"/>
        <end position="226"/>
    </location>
</feature>
<feature type="binding site" evidence="1">
    <location>
        <position position="107"/>
    </location>
    <ligand>
        <name>5-phospho-alpha-D-ribose 1-diphosphate</name>
        <dbReference type="ChEBI" id="CHEBI:58017"/>
        <note>ligand shared between dimeric partners</note>
    </ligand>
</feature>
<feature type="binding site" description="in other chain" evidence="1">
    <location>
        <position position="108"/>
    </location>
    <ligand>
        <name>5-phospho-alpha-D-ribose 1-diphosphate</name>
        <dbReference type="ChEBI" id="CHEBI:58017"/>
        <note>ligand shared between dimeric partners</note>
    </ligand>
</feature>
<feature type="binding site" evidence="1">
    <location>
        <position position="111"/>
    </location>
    <ligand>
        <name>5-phospho-alpha-D-ribose 1-diphosphate</name>
        <dbReference type="ChEBI" id="CHEBI:58017"/>
        <note>ligand shared between dimeric partners</note>
    </ligand>
</feature>
<feature type="binding site" description="in other chain" evidence="1">
    <location>
        <begin position="133"/>
        <end position="141"/>
    </location>
    <ligand>
        <name>5-phospho-alpha-D-ribose 1-diphosphate</name>
        <dbReference type="ChEBI" id="CHEBI:58017"/>
        <note>ligand shared between dimeric partners</note>
    </ligand>
</feature>
<feature type="binding site" evidence="1">
    <location>
        <position position="137"/>
    </location>
    <ligand>
        <name>orotate</name>
        <dbReference type="ChEBI" id="CHEBI:30839"/>
    </ligand>
</feature>
<protein>
    <recommendedName>
        <fullName evidence="1">Orotate phosphoribosyltransferase</fullName>
        <shortName evidence="1">OPRT</shortName>
        <shortName evidence="1">OPRTase</shortName>
        <ecNumber evidence="1">2.4.2.10</ecNumber>
    </recommendedName>
</protein>
<comment type="function">
    <text evidence="1">Catalyzes the transfer of a ribosyl phosphate group from 5-phosphoribose 1-diphosphate to orotate, leading to the formation of orotidine monophosphate (OMP).</text>
</comment>
<comment type="catalytic activity">
    <reaction evidence="1">
        <text>orotidine 5'-phosphate + diphosphate = orotate + 5-phospho-alpha-D-ribose 1-diphosphate</text>
        <dbReference type="Rhea" id="RHEA:10380"/>
        <dbReference type="ChEBI" id="CHEBI:30839"/>
        <dbReference type="ChEBI" id="CHEBI:33019"/>
        <dbReference type="ChEBI" id="CHEBI:57538"/>
        <dbReference type="ChEBI" id="CHEBI:58017"/>
        <dbReference type="EC" id="2.4.2.10"/>
    </reaction>
</comment>
<comment type="cofactor">
    <cofactor evidence="1">
        <name>Mg(2+)</name>
        <dbReference type="ChEBI" id="CHEBI:18420"/>
    </cofactor>
</comment>
<comment type="pathway">
    <text evidence="1">Pyrimidine metabolism; UMP biosynthesis via de novo pathway; UMP from orotate: step 1/2.</text>
</comment>
<comment type="subunit">
    <text evidence="1">Homodimer.</text>
</comment>
<comment type="similarity">
    <text evidence="1">Belongs to the purine/pyrimidine phosphoribosyltransferase family. PyrE subfamily.</text>
</comment>
<sequence>MIPSSYPSAEEIARLSARMLLEIGAVNFNTDEPYTLASGLPSPSYIDCRKLISFPRIRSTLMDFMAVTVMRNAGFEAFDNIAGGETAGIPFAALVAERLALPMTYVRKKPKGYGRNARIEGAMSEGERVLLVEDLTTDGGSKLSFVDAIRETGATCGHTAVIFYYDIFPETTKTLGDHGVQLHYLCTWWDVLAEARAQAAFSTETLDEVEKFLRDPRAWQEANKKT</sequence>
<accession>Q1GFQ6</accession>
<proteinExistence type="inferred from homology"/>